<sequence length="122" mass="13573">MKTIVRLFAILMVLISSVGFVGSAVAAELNPVDAKLTTEYGQKIDLNNEDVRGFRQLRGFYPNLAAKIIKYSPYDSVEEVLDIPGLSERQRQRLEANLDKFVVTPPSSELNEGGDRINPGLY</sequence>
<protein>
    <recommendedName>
        <fullName evidence="1">Photosystem II extrinsic protein U</fullName>
        <shortName evidence="1">PSII-U</shortName>
        <shortName evidence="1">PsbU</shortName>
    </recommendedName>
    <alternativeName>
        <fullName evidence="1">Photosystem II 12 kDa extrinsic protein</fullName>
        <shortName evidence="1">PS II complex 12 kDa extrinsic protein</shortName>
    </alternativeName>
</protein>
<name>PSBU_CROS5</name>
<organism>
    <name type="scientific">Crocosphaera subtropica (strain ATCC 51142 / BH68)</name>
    <name type="common">Cyanothece sp. (strain ATCC 51142)</name>
    <dbReference type="NCBI Taxonomy" id="43989"/>
    <lineage>
        <taxon>Bacteria</taxon>
        <taxon>Bacillati</taxon>
        <taxon>Cyanobacteriota</taxon>
        <taxon>Cyanophyceae</taxon>
        <taxon>Oscillatoriophycideae</taxon>
        <taxon>Chroococcales</taxon>
        <taxon>Aphanothecaceae</taxon>
        <taxon>Crocosphaera</taxon>
        <taxon>Crocosphaera subtropica</taxon>
    </lineage>
</organism>
<accession>O50291</accession>
<accession>B1WT51</accession>
<evidence type="ECO:0000255" key="1">
    <source>
        <dbReference type="HAMAP-Rule" id="MF_00589"/>
    </source>
</evidence>
<evidence type="ECO:0000305" key="2"/>
<dbReference type="EMBL" id="AF036250">
    <property type="protein sequence ID" value="AAD10131.1"/>
    <property type="molecule type" value="Genomic_DNA"/>
</dbReference>
<dbReference type="EMBL" id="CP000806">
    <property type="protein sequence ID" value="ACB51973.1"/>
    <property type="status" value="ALT_INIT"/>
    <property type="molecule type" value="Genomic_DNA"/>
</dbReference>
<dbReference type="RefSeq" id="WP_009544685.1">
    <property type="nucleotide sequence ID" value="NC_010546.1"/>
</dbReference>
<dbReference type="SMR" id="O50291"/>
<dbReference type="STRING" id="43989.cce_2625"/>
<dbReference type="KEGG" id="cyt:cce_2625"/>
<dbReference type="eggNOG" id="COG1555">
    <property type="taxonomic scope" value="Bacteria"/>
</dbReference>
<dbReference type="HOGENOM" id="CLU_141240_1_0_3"/>
<dbReference type="OrthoDB" id="463369at2"/>
<dbReference type="Proteomes" id="UP000001203">
    <property type="component" value="Chromosome circular"/>
</dbReference>
<dbReference type="GO" id="GO:0019898">
    <property type="term" value="C:extrinsic component of membrane"/>
    <property type="evidence" value="ECO:0007669"/>
    <property type="project" value="InterPro"/>
</dbReference>
<dbReference type="GO" id="GO:0009654">
    <property type="term" value="C:photosystem II oxygen evolving complex"/>
    <property type="evidence" value="ECO:0007669"/>
    <property type="project" value="InterPro"/>
</dbReference>
<dbReference type="GO" id="GO:0031676">
    <property type="term" value="C:plasma membrane-derived thylakoid membrane"/>
    <property type="evidence" value="ECO:0007669"/>
    <property type="project" value="UniProtKB-SubCell"/>
</dbReference>
<dbReference type="GO" id="GO:0015979">
    <property type="term" value="P:photosynthesis"/>
    <property type="evidence" value="ECO:0007669"/>
    <property type="project" value="UniProtKB-UniRule"/>
</dbReference>
<dbReference type="GO" id="GO:0042549">
    <property type="term" value="P:photosystem II stabilization"/>
    <property type="evidence" value="ECO:0007669"/>
    <property type="project" value="InterPro"/>
</dbReference>
<dbReference type="Gene3D" id="1.10.150.320">
    <property type="entry name" value="Photosystem II 12 kDa extrinsic protein"/>
    <property type="match status" value="1"/>
</dbReference>
<dbReference type="HAMAP" id="MF_00589">
    <property type="entry name" value="PSII_PsbU"/>
    <property type="match status" value="1"/>
</dbReference>
<dbReference type="InterPro" id="IPR010527">
    <property type="entry name" value="PSII_PsbU"/>
</dbReference>
<dbReference type="NCBIfam" id="NF002708">
    <property type="entry name" value="PRK02515.1"/>
    <property type="match status" value="1"/>
</dbReference>
<dbReference type="Pfam" id="PF06514">
    <property type="entry name" value="PsbU"/>
    <property type="match status" value="1"/>
</dbReference>
<dbReference type="SUPFAM" id="SSF81585">
    <property type="entry name" value="PsbU/PolX domain-like"/>
    <property type="match status" value="1"/>
</dbReference>
<proteinExistence type="inferred from homology"/>
<reference key="1">
    <citation type="online journal article" date="1998" name="Plant Gene Register">
        <title>Cloning and sequencing of the psbU gene from the cyanobacterium Cyanothece sp. ATCC 51142.</title>
        <authorList>
            <person name="Meunier P.C."/>
            <person name="Tang H.-Y."/>
            <person name="Sherman L.A."/>
        </authorList>
        <locator>PGR98-036</locator>
    </citation>
    <scope>NUCLEOTIDE SEQUENCE [GENOMIC DNA]</scope>
    <source>
        <strain>ATCC 51142 / BH68</strain>
    </source>
</reference>
<reference key="2">
    <citation type="journal article" date="2008" name="Proc. Natl. Acad. Sci. U.S.A.">
        <title>The genome of Cyanothece 51142, a unicellular diazotrophic cyanobacterium important in the marine nitrogen cycle.</title>
        <authorList>
            <person name="Welsh E.A."/>
            <person name="Liberton M."/>
            <person name="Stoeckel J."/>
            <person name="Loh T."/>
            <person name="Elvitigala T."/>
            <person name="Wang C."/>
            <person name="Wollam A."/>
            <person name="Fulton R.S."/>
            <person name="Clifton S.W."/>
            <person name="Jacobs J.M."/>
            <person name="Aurora R."/>
            <person name="Ghosh B.K."/>
            <person name="Sherman L.A."/>
            <person name="Smith R.D."/>
            <person name="Wilson R.K."/>
            <person name="Pakrasi H.B."/>
        </authorList>
    </citation>
    <scope>NUCLEOTIDE SEQUENCE [LARGE SCALE GENOMIC DNA]</scope>
    <source>
        <strain>ATCC 51142 / BH68</strain>
    </source>
</reference>
<feature type="signal peptide" evidence="1">
    <location>
        <begin position="1"/>
        <end position="26"/>
    </location>
</feature>
<feature type="chain" id="PRO_0000029598" description="Photosystem II extrinsic protein U">
    <location>
        <begin position="27"/>
        <end position="122"/>
    </location>
</feature>
<gene>
    <name evidence="1" type="primary">psbU</name>
    <name type="ordered locus">cce_2625</name>
</gene>
<comment type="function">
    <text evidence="1">One of the extrinsic, lumenal subunits of photosystem II (PSII). PSII is a light-driven water plastoquinone oxidoreductase, using light energy to abstract electrons from H(2)O, generating a proton gradient subsequently used for ATP formation. The extrinsic proteins stabilize the structure of photosystem II oxygen-evolving complex (OEC), the ion environment of oxygen evolution and protect the OEC against heat-induced inactivation.</text>
</comment>
<comment type="subunit">
    <text evidence="1">PSII is composed of 1 copy each of membrane proteins PsbA, PsbB, PsbC, PsbD, PsbE, PsbF, PsbH, PsbI, PsbJ, PsbK, PsbL, PsbM, PsbT, PsbX, PsbY, PsbZ, Psb30/Ycf12, peripheral proteins PsbO, CyanoQ (PsbQ), PsbU, PsbV and a large number of cofactors. It forms dimeric complexes.</text>
</comment>
<comment type="subcellular location">
    <subcellularLocation>
        <location evidence="1">Cellular thylakoid membrane</location>
        <topology evidence="1">Peripheral membrane protein</topology>
        <orientation evidence="1">Lumenal side</orientation>
    </subcellularLocation>
</comment>
<comment type="similarity">
    <text evidence="1">Belongs to the PsbU family.</text>
</comment>
<comment type="sequence caution" evidence="2">
    <conflict type="erroneous initiation">
        <sequence resource="EMBL-CDS" id="ACB51973"/>
    </conflict>
    <text>Extended N-terminus.</text>
</comment>
<keyword id="KW-0249">Electron transport</keyword>
<keyword id="KW-0472">Membrane</keyword>
<keyword id="KW-0602">Photosynthesis</keyword>
<keyword id="KW-0604">Photosystem II</keyword>
<keyword id="KW-1185">Reference proteome</keyword>
<keyword id="KW-0732">Signal</keyword>
<keyword id="KW-0793">Thylakoid</keyword>
<keyword id="KW-0813">Transport</keyword>